<dbReference type="EC" id="2.8.4.3" evidence="1"/>
<dbReference type="EMBL" id="CP000859">
    <property type="protein sequence ID" value="ABW68159.1"/>
    <property type="molecule type" value="Genomic_DNA"/>
</dbReference>
<dbReference type="RefSeq" id="WP_012175771.1">
    <property type="nucleotide sequence ID" value="NC_009943.1"/>
</dbReference>
<dbReference type="SMR" id="A8ZVH2"/>
<dbReference type="STRING" id="96561.Dole_2355"/>
<dbReference type="KEGG" id="dol:Dole_2355"/>
<dbReference type="eggNOG" id="COG0621">
    <property type="taxonomic scope" value="Bacteria"/>
</dbReference>
<dbReference type="HOGENOM" id="CLU_018697_2_0_7"/>
<dbReference type="OrthoDB" id="9805215at2"/>
<dbReference type="Proteomes" id="UP000008561">
    <property type="component" value="Chromosome"/>
</dbReference>
<dbReference type="GO" id="GO:0005829">
    <property type="term" value="C:cytosol"/>
    <property type="evidence" value="ECO:0007669"/>
    <property type="project" value="TreeGrafter"/>
</dbReference>
<dbReference type="GO" id="GO:0051539">
    <property type="term" value="F:4 iron, 4 sulfur cluster binding"/>
    <property type="evidence" value="ECO:0007669"/>
    <property type="project" value="UniProtKB-UniRule"/>
</dbReference>
<dbReference type="GO" id="GO:0046872">
    <property type="term" value="F:metal ion binding"/>
    <property type="evidence" value="ECO:0007669"/>
    <property type="project" value="UniProtKB-KW"/>
</dbReference>
<dbReference type="GO" id="GO:0035597">
    <property type="term" value="F:N6-isopentenyladenosine methylthiotransferase activity"/>
    <property type="evidence" value="ECO:0007669"/>
    <property type="project" value="TreeGrafter"/>
</dbReference>
<dbReference type="CDD" id="cd01335">
    <property type="entry name" value="Radical_SAM"/>
    <property type="match status" value="1"/>
</dbReference>
<dbReference type="FunFam" id="3.40.50.12160:FF:000003">
    <property type="entry name" value="CDK5 regulatory subunit-associated protein 1"/>
    <property type="match status" value="1"/>
</dbReference>
<dbReference type="FunFam" id="3.80.30.20:FF:000001">
    <property type="entry name" value="tRNA-2-methylthio-N(6)-dimethylallyladenosine synthase 2"/>
    <property type="match status" value="1"/>
</dbReference>
<dbReference type="Gene3D" id="3.40.50.12160">
    <property type="entry name" value="Methylthiotransferase, N-terminal domain"/>
    <property type="match status" value="1"/>
</dbReference>
<dbReference type="Gene3D" id="3.80.30.20">
    <property type="entry name" value="tm_1862 like domain"/>
    <property type="match status" value="1"/>
</dbReference>
<dbReference type="HAMAP" id="MF_01864">
    <property type="entry name" value="tRNA_metthiotr_MiaB"/>
    <property type="match status" value="1"/>
</dbReference>
<dbReference type="InterPro" id="IPR006638">
    <property type="entry name" value="Elp3/MiaA/NifB-like_rSAM"/>
</dbReference>
<dbReference type="InterPro" id="IPR005839">
    <property type="entry name" value="Methylthiotransferase"/>
</dbReference>
<dbReference type="InterPro" id="IPR020612">
    <property type="entry name" value="Methylthiotransferase_CS"/>
</dbReference>
<dbReference type="InterPro" id="IPR013848">
    <property type="entry name" value="Methylthiotransferase_N"/>
</dbReference>
<dbReference type="InterPro" id="IPR038135">
    <property type="entry name" value="Methylthiotransferase_N_sf"/>
</dbReference>
<dbReference type="InterPro" id="IPR006463">
    <property type="entry name" value="MiaB_methiolase"/>
</dbReference>
<dbReference type="InterPro" id="IPR007197">
    <property type="entry name" value="rSAM"/>
</dbReference>
<dbReference type="InterPro" id="IPR023404">
    <property type="entry name" value="rSAM_horseshoe"/>
</dbReference>
<dbReference type="NCBIfam" id="TIGR01574">
    <property type="entry name" value="miaB-methiolase"/>
    <property type="match status" value="1"/>
</dbReference>
<dbReference type="NCBIfam" id="TIGR00089">
    <property type="entry name" value="MiaB/RimO family radical SAM methylthiotransferase"/>
    <property type="match status" value="1"/>
</dbReference>
<dbReference type="PANTHER" id="PTHR43020">
    <property type="entry name" value="CDK5 REGULATORY SUBUNIT-ASSOCIATED PROTEIN 1"/>
    <property type="match status" value="1"/>
</dbReference>
<dbReference type="PANTHER" id="PTHR43020:SF2">
    <property type="entry name" value="MITOCHONDRIAL TRNA METHYLTHIOTRANSFERASE CDK5RAP1"/>
    <property type="match status" value="1"/>
</dbReference>
<dbReference type="Pfam" id="PF04055">
    <property type="entry name" value="Radical_SAM"/>
    <property type="match status" value="1"/>
</dbReference>
<dbReference type="Pfam" id="PF00919">
    <property type="entry name" value="UPF0004"/>
    <property type="match status" value="1"/>
</dbReference>
<dbReference type="SFLD" id="SFLDF00273">
    <property type="entry name" value="(dimethylallyl)adenosine_tRNA"/>
    <property type="match status" value="1"/>
</dbReference>
<dbReference type="SFLD" id="SFLDG01082">
    <property type="entry name" value="B12-binding_domain_containing"/>
    <property type="match status" value="1"/>
</dbReference>
<dbReference type="SFLD" id="SFLDS00029">
    <property type="entry name" value="Radical_SAM"/>
    <property type="match status" value="1"/>
</dbReference>
<dbReference type="SMART" id="SM00729">
    <property type="entry name" value="Elp3"/>
    <property type="match status" value="1"/>
</dbReference>
<dbReference type="SUPFAM" id="SSF102114">
    <property type="entry name" value="Radical SAM enzymes"/>
    <property type="match status" value="1"/>
</dbReference>
<dbReference type="PROSITE" id="PS51449">
    <property type="entry name" value="MTTASE_N"/>
    <property type="match status" value="1"/>
</dbReference>
<dbReference type="PROSITE" id="PS01278">
    <property type="entry name" value="MTTASE_RADICAL"/>
    <property type="match status" value="1"/>
</dbReference>
<dbReference type="PROSITE" id="PS51918">
    <property type="entry name" value="RADICAL_SAM"/>
    <property type="match status" value="1"/>
</dbReference>
<proteinExistence type="inferred from homology"/>
<accession>A8ZVH2</accession>
<feature type="chain" id="PRO_0000374262" description="tRNA-2-methylthio-N(6)-dimethylallyladenosine synthase">
    <location>
        <begin position="1"/>
        <end position="466"/>
    </location>
</feature>
<feature type="domain" description="MTTase N-terminal" evidence="1">
    <location>
        <begin position="2"/>
        <end position="118"/>
    </location>
</feature>
<feature type="domain" description="Radical SAM core" evidence="2">
    <location>
        <begin position="143"/>
        <end position="372"/>
    </location>
</feature>
<feature type="domain" description="TRAM" evidence="1">
    <location>
        <begin position="375"/>
        <end position="453"/>
    </location>
</feature>
<feature type="binding site" evidence="1">
    <location>
        <position position="11"/>
    </location>
    <ligand>
        <name>[4Fe-4S] cluster</name>
        <dbReference type="ChEBI" id="CHEBI:49883"/>
        <label>1</label>
    </ligand>
</feature>
<feature type="binding site" evidence="1">
    <location>
        <position position="47"/>
    </location>
    <ligand>
        <name>[4Fe-4S] cluster</name>
        <dbReference type="ChEBI" id="CHEBI:49883"/>
        <label>1</label>
    </ligand>
</feature>
<feature type="binding site" evidence="1">
    <location>
        <position position="81"/>
    </location>
    <ligand>
        <name>[4Fe-4S] cluster</name>
        <dbReference type="ChEBI" id="CHEBI:49883"/>
        <label>1</label>
    </ligand>
</feature>
<feature type="binding site" evidence="1">
    <location>
        <position position="157"/>
    </location>
    <ligand>
        <name>[4Fe-4S] cluster</name>
        <dbReference type="ChEBI" id="CHEBI:49883"/>
        <label>2</label>
        <note>4Fe-4S-S-AdoMet</note>
    </ligand>
</feature>
<feature type="binding site" evidence="1">
    <location>
        <position position="161"/>
    </location>
    <ligand>
        <name>[4Fe-4S] cluster</name>
        <dbReference type="ChEBI" id="CHEBI:49883"/>
        <label>2</label>
        <note>4Fe-4S-S-AdoMet</note>
    </ligand>
</feature>
<feature type="binding site" evidence="1">
    <location>
        <position position="164"/>
    </location>
    <ligand>
        <name>[4Fe-4S] cluster</name>
        <dbReference type="ChEBI" id="CHEBI:49883"/>
        <label>2</label>
        <note>4Fe-4S-S-AdoMet</note>
    </ligand>
</feature>
<evidence type="ECO:0000255" key="1">
    <source>
        <dbReference type="HAMAP-Rule" id="MF_01864"/>
    </source>
</evidence>
<evidence type="ECO:0000255" key="2">
    <source>
        <dbReference type="PROSITE-ProRule" id="PRU01266"/>
    </source>
</evidence>
<gene>
    <name evidence="1" type="primary">miaB</name>
    <name type="ordered locus">Dole_2355</name>
</gene>
<organism>
    <name type="scientific">Desulfosudis oleivorans (strain DSM 6200 / JCM 39069 / Hxd3)</name>
    <name type="common">Desulfococcus oleovorans</name>
    <dbReference type="NCBI Taxonomy" id="96561"/>
    <lineage>
        <taxon>Bacteria</taxon>
        <taxon>Pseudomonadati</taxon>
        <taxon>Thermodesulfobacteriota</taxon>
        <taxon>Desulfobacteria</taxon>
        <taxon>Desulfobacterales</taxon>
        <taxon>Desulfosudaceae</taxon>
        <taxon>Desulfosudis</taxon>
    </lineage>
</organism>
<sequence>MKRFYIHTIGCQMNVYDSSQLSAILTAMGHRSVNAPEQADLVFVNTCTIRAKAKQKATSFVGRLAAMKRARPDMIVGVGGCLAQEEGRQLLDAFPCVDIVFGTHALGRLPGHIQAVAHQGDRIVDVEMTAAIDESVHALQGPDSSGVTGFITIMRGCDNFCTYCVVPYVRGRETSRAPEHILDEIRARVAGGLREITLLGQNVNSYGQKEGLCSFADLLARVNEIDGLHRIRFTTSHPKDLSPELAAAFTSLDKLCSHVHLPAQSGSDAVLKRMNRRYTRQAYLEKLHWLREAQPGMALSTDIIVGFPGETEQDFLQTLDLIEKVRYDSIFAFMYSDRPLAPARAFDGKVDEAEKQQRIYALLELQNRITAEKNRALEGRVEQVLVEGKSKSSGRNDITADTVQWTGRTTCNRVANFTVPRELASGNAVGPGAMVRVEIMSGLAHSLSGIAVGVEKPGAGGDAHAA</sequence>
<keyword id="KW-0004">4Fe-4S</keyword>
<keyword id="KW-0963">Cytoplasm</keyword>
<keyword id="KW-0408">Iron</keyword>
<keyword id="KW-0411">Iron-sulfur</keyword>
<keyword id="KW-0479">Metal-binding</keyword>
<keyword id="KW-1185">Reference proteome</keyword>
<keyword id="KW-0949">S-adenosyl-L-methionine</keyword>
<keyword id="KW-0808">Transferase</keyword>
<keyword id="KW-0819">tRNA processing</keyword>
<reference key="1">
    <citation type="submission" date="2007-10" db="EMBL/GenBank/DDBJ databases">
        <title>Complete sequence of Desulfococcus oleovorans Hxd3.</title>
        <authorList>
            <consortium name="US DOE Joint Genome Institute"/>
            <person name="Copeland A."/>
            <person name="Lucas S."/>
            <person name="Lapidus A."/>
            <person name="Barry K."/>
            <person name="Glavina del Rio T."/>
            <person name="Dalin E."/>
            <person name="Tice H."/>
            <person name="Pitluck S."/>
            <person name="Kiss H."/>
            <person name="Brettin T."/>
            <person name="Bruce D."/>
            <person name="Detter J.C."/>
            <person name="Han C."/>
            <person name="Schmutz J."/>
            <person name="Larimer F."/>
            <person name="Land M."/>
            <person name="Hauser L."/>
            <person name="Kyrpides N."/>
            <person name="Kim E."/>
            <person name="Wawrik B."/>
            <person name="Richardson P."/>
        </authorList>
    </citation>
    <scope>NUCLEOTIDE SEQUENCE [LARGE SCALE GENOMIC DNA]</scope>
    <source>
        <strain>DSM 6200 / JCM 39069 / Hxd3</strain>
    </source>
</reference>
<name>MIAB_DESOH</name>
<protein>
    <recommendedName>
        <fullName evidence="1">tRNA-2-methylthio-N(6)-dimethylallyladenosine synthase</fullName>
        <ecNumber evidence="1">2.8.4.3</ecNumber>
    </recommendedName>
    <alternativeName>
        <fullName evidence="1">(Dimethylallyl)adenosine tRNA methylthiotransferase MiaB</fullName>
    </alternativeName>
    <alternativeName>
        <fullName evidence="1">tRNA-i(6)A37 methylthiotransferase</fullName>
    </alternativeName>
</protein>
<comment type="function">
    <text evidence="1">Catalyzes the methylthiolation of N6-(dimethylallyl)adenosine (i(6)A), leading to the formation of 2-methylthio-N6-(dimethylallyl)adenosine (ms(2)i(6)A) at position 37 in tRNAs that read codons beginning with uridine.</text>
</comment>
<comment type="catalytic activity">
    <reaction evidence="1">
        <text>N(6)-dimethylallyladenosine(37) in tRNA + (sulfur carrier)-SH + AH2 + 2 S-adenosyl-L-methionine = 2-methylsulfanyl-N(6)-dimethylallyladenosine(37) in tRNA + (sulfur carrier)-H + 5'-deoxyadenosine + L-methionine + A + S-adenosyl-L-homocysteine + 2 H(+)</text>
        <dbReference type="Rhea" id="RHEA:37067"/>
        <dbReference type="Rhea" id="RHEA-COMP:10375"/>
        <dbReference type="Rhea" id="RHEA-COMP:10376"/>
        <dbReference type="Rhea" id="RHEA-COMP:14737"/>
        <dbReference type="Rhea" id="RHEA-COMP:14739"/>
        <dbReference type="ChEBI" id="CHEBI:13193"/>
        <dbReference type="ChEBI" id="CHEBI:15378"/>
        <dbReference type="ChEBI" id="CHEBI:17319"/>
        <dbReference type="ChEBI" id="CHEBI:17499"/>
        <dbReference type="ChEBI" id="CHEBI:29917"/>
        <dbReference type="ChEBI" id="CHEBI:57844"/>
        <dbReference type="ChEBI" id="CHEBI:57856"/>
        <dbReference type="ChEBI" id="CHEBI:59789"/>
        <dbReference type="ChEBI" id="CHEBI:64428"/>
        <dbReference type="ChEBI" id="CHEBI:74415"/>
        <dbReference type="ChEBI" id="CHEBI:74417"/>
        <dbReference type="EC" id="2.8.4.3"/>
    </reaction>
</comment>
<comment type="cofactor">
    <cofactor evidence="1">
        <name>[4Fe-4S] cluster</name>
        <dbReference type="ChEBI" id="CHEBI:49883"/>
    </cofactor>
    <text evidence="1">Binds 2 [4Fe-4S] clusters. One cluster is coordinated with 3 cysteines and an exchangeable S-adenosyl-L-methionine.</text>
</comment>
<comment type="subunit">
    <text evidence="1">Monomer.</text>
</comment>
<comment type="subcellular location">
    <subcellularLocation>
        <location evidence="1">Cytoplasm</location>
    </subcellularLocation>
</comment>
<comment type="similarity">
    <text evidence="1">Belongs to the methylthiotransferase family. MiaB subfamily.</text>
</comment>